<keyword id="KW-0413">Isomerase</keyword>
<keyword id="KW-0511">Multifunctional enzyme</keyword>
<keyword id="KW-0521">NADP</keyword>
<keyword id="KW-0560">Oxidoreductase</keyword>
<evidence type="ECO:0000250" key="1"/>
<evidence type="ECO:0000250" key="2">
    <source>
        <dbReference type="UniProtKB" id="Q13630"/>
    </source>
</evidence>
<evidence type="ECO:0000305" key="3"/>
<name>FCL_CRIGR</name>
<gene>
    <name type="primary">GFUS</name>
    <name type="synonym">TSTA3</name>
</gene>
<organism>
    <name type="scientific">Cricetulus griseus</name>
    <name type="common">Chinese hamster</name>
    <name type="synonym">Cricetulus barabensis griseus</name>
    <dbReference type="NCBI Taxonomy" id="10029"/>
    <lineage>
        <taxon>Eukaryota</taxon>
        <taxon>Metazoa</taxon>
        <taxon>Chordata</taxon>
        <taxon>Craniata</taxon>
        <taxon>Vertebrata</taxon>
        <taxon>Euteleostomi</taxon>
        <taxon>Mammalia</taxon>
        <taxon>Eutheria</taxon>
        <taxon>Euarchontoglires</taxon>
        <taxon>Glires</taxon>
        <taxon>Rodentia</taxon>
        <taxon>Myomorpha</taxon>
        <taxon>Muroidea</taxon>
        <taxon>Cricetidae</taxon>
        <taxon>Cricetinae</taxon>
        <taxon>Cricetulus</taxon>
    </lineage>
</organism>
<feature type="chain" id="PRO_0000174349" description="GDP-L-fucose synthase">
    <location>
        <begin position="1"/>
        <end position="321"/>
    </location>
</feature>
<feature type="active site" description="Proton donor/acceptor" evidence="1">
    <location>
        <position position="143"/>
    </location>
</feature>
<feature type="binding site" evidence="2">
    <location>
        <begin position="14"/>
        <end position="20"/>
    </location>
    <ligand>
        <name>NADP(+)</name>
        <dbReference type="ChEBI" id="CHEBI:58349"/>
    </ligand>
</feature>
<feature type="binding site" evidence="2">
    <location>
        <position position="147"/>
    </location>
    <ligand>
        <name>NADP(+)</name>
        <dbReference type="ChEBI" id="CHEBI:58349"/>
    </ligand>
</feature>
<feature type="binding site" evidence="2">
    <location>
        <begin position="170"/>
        <end position="173"/>
    </location>
    <ligand>
        <name>NADP(+)</name>
        <dbReference type="ChEBI" id="CHEBI:58349"/>
    </ligand>
</feature>
<feature type="binding site" evidence="2">
    <location>
        <position position="186"/>
    </location>
    <ligand>
        <name>NADP(+)</name>
        <dbReference type="ChEBI" id="CHEBI:58349"/>
    </ligand>
</feature>
<feature type="binding site" evidence="2">
    <location>
        <position position="194"/>
    </location>
    <ligand>
        <name>substrate</name>
    </ligand>
</feature>
<feature type="binding site" evidence="2">
    <location>
        <position position="208"/>
    </location>
    <ligand>
        <name>substrate</name>
    </ligand>
</feature>
<feature type="binding site" evidence="2">
    <location>
        <position position="215"/>
    </location>
    <ligand>
        <name>substrate</name>
    </ligand>
</feature>
<feature type="binding site" evidence="2">
    <location>
        <position position="277"/>
    </location>
    <ligand>
        <name>substrate</name>
    </ligand>
</feature>
<feature type="site" description="Important for catalytic activity" evidence="1">
    <location>
        <position position="114"/>
    </location>
</feature>
<feature type="site" description="Important for catalytic activity" evidence="1">
    <location>
        <position position="116"/>
    </location>
</feature>
<feature type="site" description="Lowers pKa of active site Tyr" evidence="1">
    <location>
        <position position="147"/>
    </location>
</feature>
<reference key="1">
    <citation type="submission" date="2002-06" db="EMBL/GenBank/DDBJ databases">
        <title>Glycan-dependent regulation of GDP-mannose 4,6-dehydratase activity.</title>
        <authorList>
            <person name="Becker D.J."/>
            <person name="Smith P.L."/>
            <person name="Petryniak B."/>
            <person name="Kelly R.J."/>
            <person name="Myers J.T."/>
            <person name="Wu B."/>
            <person name="Wang P.G."/>
            <person name="Lowe J.B."/>
        </authorList>
    </citation>
    <scope>NUCLEOTIDE SEQUENCE [MRNA]</scope>
</reference>
<dbReference type="EC" id="1.1.1.271" evidence="2"/>
<dbReference type="EMBL" id="AF525365">
    <property type="protein sequence ID" value="AAM91926.1"/>
    <property type="molecule type" value="mRNA"/>
</dbReference>
<dbReference type="RefSeq" id="NP_001233708.1">
    <property type="nucleotide sequence ID" value="NM_001246779.1"/>
</dbReference>
<dbReference type="RefSeq" id="XP_007653311.1">
    <property type="nucleotide sequence ID" value="XM_007655121.2"/>
</dbReference>
<dbReference type="RefSeq" id="XP_016819321.1">
    <property type="nucleotide sequence ID" value="XM_016963832.1"/>
</dbReference>
<dbReference type="SMR" id="Q8K3X2"/>
<dbReference type="PaxDb" id="10029-NP_001233708.1"/>
<dbReference type="GeneID" id="100689348"/>
<dbReference type="KEGG" id="cge:100689348"/>
<dbReference type="CTD" id="7264"/>
<dbReference type="eggNOG" id="KOG1431">
    <property type="taxonomic scope" value="Eukaryota"/>
</dbReference>
<dbReference type="OMA" id="HPSNYGY"/>
<dbReference type="OrthoDB" id="202470at2759"/>
<dbReference type="UniPathway" id="UPA00128">
    <property type="reaction ID" value="UER00191"/>
</dbReference>
<dbReference type="Proteomes" id="UP000694386">
    <property type="component" value="Unplaced"/>
</dbReference>
<dbReference type="Proteomes" id="UP001108280">
    <property type="component" value="Chromosome 2"/>
</dbReference>
<dbReference type="GO" id="GO:0050577">
    <property type="term" value="F:GDP-L-fucose synthase activity"/>
    <property type="evidence" value="ECO:0007669"/>
    <property type="project" value="UniProtKB-EC"/>
</dbReference>
<dbReference type="GO" id="GO:0016853">
    <property type="term" value="F:isomerase activity"/>
    <property type="evidence" value="ECO:0007669"/>
    <property type="project" value="UniProtKB-KW"/>
</dbReference>
<dbReference type="GO" id="GO:0042351">
    <property type="term" value="P:'de novo' GDP-L-fucose biosynthetic process"/>
    <property type="evidence" value="ECO:0007669"/>
    <property type="project" value="UniProtKB-UniPathway"/>
</dbReference>
<dbReference type="GO" id="GO:0010595">
    <property type="term" value="P:positive regulation of endothelial cell migration"/>
    <property type="evidence" value="ECO:0000250"/>
    <property type="project" value="UniProtKB"/>
</dbReference>
<dbReference type="GO" id="GO:1904906">
    <property type="term" value="P:positive regulation of endothelial cell-matrix adhesion via fibronectin"/>
    <property type="evidence" value="ECO:0000250"/>
    <property type="project" value="UniProtKB"/>
</dbReference>
<dbReference type="CDD" id="cd05239">
    <property type="entry name" value="GDP_FS_SDR_e"/>
    <property type="match status" value="1"/>
</dbReference>
<dbReference type="FunFam" id="3.90.25.10:FF:000043">
    <property type="entry name" value="Tissue-specific transplantation antigen P35B"/>
    <property type="match status" value="1"/>
</dbReference>
<dbReference type="Gene3D" id="3.40.50.720">
    <property type="entry name" value="NAD(P)-binding Rossmann-like Domain"/>
    <property type="match status" value="1"/>
</dbReference>
<dbReference type="Gene3D" id="3.90.25.10">
    <property type="entry name" value="UDP-galactose 4-epimerase, domain 1"/>
    <property type="match status" value="1"/>
</dbReference>
<dbReference type="HAMAP" id="MF_00956">
    <property type="entry name" value="GDP_fucose_synth"/>
    <property type="match status" value="1"/>
</dbReference>
<dbReference type="InterPro" id="IPR001509">
    <property type="entry name" value="Epimerase_deHydtase"/>
</dbReference>
<dbReference type="InterPro" id="IPR028614">
    <property type="entry name" value="GDP_fucose/colitose_synth"/>
</dbReference>
<dbReference type="InterPro" id="IPR036291">
    <property type="entry name" value="NAD(P)-bd_dom_sf"/>
</dbReference>
<dbReference type="PANTHER" id="PTHR43238">
    <property type="entry name" value="GDP-L-FUCOSE SYNTHASE"/>
    <property type="match status" value="1"/>
</dbReference>
<dbReference type="PANTHER" id="PTHR43238:SF1">
    <property type="entry name" value="GDP-L-FUCOSE SYNTHASE"/>
    <property type="match status" value="1"/>
</dbReference>
<dbReference type="Pfam" id="PF01370">
    <property type="entry name" value="Epimerase"/>
    <property type="match status" value="1"/>
</dbReference>
<dbReference type="SUPFAM" id="SSF51735">
    <property type="entry name" value="NAD(P)-binding Rossmann-fold domains"/>
    <property type="match status" value="1"/>
</dbReference>
<proteinExistence type="evidence at transcript level"/>
<sequence length="321" mass="35837">MGEPQGSRRILVTGGSGLVGRAIQKVVADGAGLPGEEWVFVSSKDADLTDAAQTQALFQKVQPTHVIHLAAMVGGLFRNIKYNLDFWRKNVHINDNVLHSAFEVGTRKVVSCLSTCIFPDKTTYPIDETMIHNGPPHSSNFGYSYAKRMIDVQNRAYFQQHGCTFTAVIPTNVFGPHDNFNIEDGHVLPGLIHKVHLAKSNGSALTVWGTGKPRRQFIYSLDLARLFIWVLREYNEVEPIILSVGEEDEVSIKEAAEAVVEAMDFCGEVTFDSTKSDGQYKKTASNGKLRAYLPDFRFTPFKQAVKETCAWFTDNYEQARK</sequence>
<comment type="function">
    <text evidence="2">Catalyzes the two-step NADP-dependent conversion of GDP-4-dehydro-6-deoxy-D-mannose to GDP-fucose, involving an epimerase and a reductase reaction.</text>
</comment>
<comment type="catalytic activity">
    <reaction evidence="2">
        <text>GDP-beta-L-fucose + NADP(+) = GDP-4-dehydro-alpha-D-rhamnose + NADPH + H(+)</text>
        <dbReference type="Rhea" id="RHEA:18885"/>
        <dbReference type="ChEBI" id="CHEBI:15378"/>
        <dbReference type="ChEBI" id="CHEBI:57273"/>
        <dbReference type="ChEBI" id="CHEBI:57783"/>
        <dbReference type="ChEBI" id="CHEBI:57964"/>
        <dbReference type="ChEBI" id="CHEBI:58349"/>
        <dbReference type="EC" id="1.1.1.271"/>
    </reaction>
</comment>
<comment type="pathway">
    <text evidence="2">Nucleotide-sugar biosynthesis; GDP-L-fucose biosynthesis via de novo pathway; GDP-L-fucose from GDP-alpha-D-mannose: step 2/2.</text>
</comment>
<comment type="subunit">
    <text evidence="2">Homodimer.</text>
</comment>
<comment type="similarity">
    <text evidence="3">Belongs to the NAD(P)-dependent epimerase/dehydratase family. Fucose synthase subfamily.</text>
</comment>
<accession>Q8K3X2</accession>
<protein>
    <recommendedName>
        <fullName evidence="3">GDP-L-fucose synthase</fullName>
        <ecNumber evidence="2">1.1.1.271</ecNumber>
    </recommendedName>
    <alternativeName>
        <fullName>GDP-4-keto-6-deoxy-D-mannose-3,5-epimerase-4-reductase</fullName>
    </alternativeName>
    <alternativeName>
        <fullName>Protein FX</fullName>
    </alternativeName>
    <alternativeName>
        <fullName>Red cell NADP(H)-binding protein</fullName>
    </alternativeName>
</protein>